<proteinExistence type="predicted"/>
<name>Y514_MYCBO</name>
<dbReference type="EMBL" id="LT708304">
    <property type="protein sequence ID" value="SIT99110.1"/>
    <property type="molecule type" value="Genomic_DNA"/>
</dbReference>
<dbReference type="RefSeq" id="NP_854177.1">
    <property type="nucleotide sequence ID" value="NC_002945.3"/>
</dbReference>
<dbReference type="RefSeq" id="WP_003898486.1">
    <property type="nucleotide sequence ID" value="NC_002945.4"/>
</dbReference>
<dbReference type="PATRIC" id="fig|233413.5.peg.560"/>
<dbReference type="Proteomes" id="UP000001419">
    <property type="component" value="Chromosome"/>
</dbReference>
<dbReference type="GO" id="GO:0016020">
    <property type="term" value="C:membrane"/>
    <property type="evidence" value="ECO:0007669"/>
    <property type="project" value="TreeGrafter"/>
</dbReference>
<dbReference type="GO" id="GO:0016746">
    <property type="term" value="F:acyltransferase activity"/>
    <property type="evidence" value="ECO:0007669"/>
    <property type="project" value="InterPro"/>
</dbReference>
<dbReference type="CDD" id="cd07987">
    <property type="entry name" value="LPLAT_MGAT-like"/>
    <property type="match status" value="1"/>
</dbReference>
<dbReference type="InterPro" id="IPR016676">
    <property type="entry name" value="P_lipid/glycerol_AcTrfase_prd"/>
</dbReference>
<dbReference type="InterPro" id="IPR002123">
    <property type="entry name" value="Plipid/glycerol_acylTrfase"/>
</dbReference>
<dbReference type="PANTHER" id="PTHR22753:SF14">
    <property type="entry name" value="MONOACYLGLYCEROL_DIACYLGLYCEROL O-ACYLTRANSFERASE"/>
    <property type="match status" value="1"/>
</dbReference>
<dbReference type="PANTHER" id="PTHR22753">
    <property type="entry name" value="TRANSMEMBRANE PROTEIN 68"/>
    <property type="match status" value="1"/>
</dbReference>
<dbReference type="Pfam" id="PF01553">
    <property type="entry name" value="Acyltransferase"/>
    <property type="match status" value="1"/>
</dbReference>
<dbReference type="PIRSF" id="PIRSF016753">
    <property type="entry name" value="P_lipid/glycerol_ac_tran_prd"/>
    <property type="match status" value="1"/>
</dbReference>
<dbReference type="SMART" id="SM00563">
    <property type="entry name" value="PlsC"/>
    <property type="match status" value="1"/>
</dbReference>
<dbReference type="SUPFAM" id="SSF69593">
    <property type="entry name" value="Glycerol-3-phosphate (1)-acyltransferase"/>
    <property type="match status" value="1"/>
</dbReference>
<feature type="chain" id="PRO_0000103710" description="Uncharacterized protein Mb0514">
    <location>
        <begin position="1"/>
        <end position="358"/>
    </location>
</feature>
<feature type="region of interest" description="Disordered" evidence="1">
    <location>
        <begin position="1"/>
        <end position="47"/>
    </location>
</feature>
<feature type="compositionally biased region" description="Basic residues" evidence="1">
    <location>
        <begin position="18"/>
        <end position="29"/>
    </location>
</feature>
<organism>
    <name type="scientific">Mycobacterium bovis (strain ATCC BAA-935 / AF2122/97)</name>
    <dbReference type="NCBI Taxonomy" id="233413"/>
    <lineage>
        <taxon>Bacteria</taxon>
        <taxon>Bacillati</taxon>
        <taxon>Actinomycetota</taxon>
        <taxon>Actinomycetes</taxon>
        <taxon>Mycobacteriales</taxon>
        <taxon>Mycobacteriaceae</taxon>
        <taxon>Mycobacterium</taxon>
        <taxon>Mycobacterium tuberculosis complex</taxon>
    </lineage>
</organism>
<comment type="similarity">
    <text evidence="2">To M.leprae ML2427.</text>
</comment>
<protein>
    <recommendedName>
        <fullName>Uncharacterized protein Mb0514</fullName>
    </recommendedName>
</protein>
<accession>P64724</accession>
<accession>A0A1R3XVJ0</accession>
<accession>Q11167</accession>
<accession>X2BF83</accession>
<reference key="1">
    <citation type="journal article" date="2003" name="Proc. Natl. Acad. Sci. U.S.A.">
        <title>The complete genome sequence of Mycobacterium bovis.</title>
        <authorList>
            <person name="Garnier T."/>
            <person name="Eiglmeier K."/>
            <person name="Camus J.-C."/>
            <person name="Medina N."/>
            <person name="Mansoor H."/>
            <person name="Pryor M."/>
            <person name="Duthoy S."/>
            <person name="Grondin S."/>
            <person name="Lacroix C."/>
            <person name="Monsempe C."/>
            <person name="Simon S."/>
            <person name="Harris B."/>
            <person name="Atkin R."/>
            <person name="Doggett J."/>
            <person name="Mayes R."/>
            <person name="Keating L."/>
            <person name="Wheeler P.R."/>
            <person name="Parkhill J."/>
            <person name="Barrell B.G."/>
            <person name="Cole S.T."/>
            <person name="Gordon S.V."/>
            <person name="Hewinson R.G."/>
        </authorList>
    </citation>
    <scope>NUCLEOTIDE SEQUENCE [LARGE SCALE GENOMIC DNA]</scope>
    <source>
        <strain>ATCC BAA-935 / AF2122/97</strain>
    </source>
</reference>
<reference key="2">
    <citation type="journal article" date="2017" name="Genome Announc.">
        <title>Updated reference genome sequence and annotation of Mycobacterium bovis AF2122/97.</title>
        <authorList>
            <person name="Malone K.M."/>
            <person name="Farrell D."/>
            <person name="Stuber T.P."/>
            <person name="Schubert O.T."/>
            <person name="Aebersold R."/>
            <person name="Robbe-Austerman S."/>
            <person name="Gordon S.V."/>
        </authorList>
    </citation>
    <scope>NUCLEOTIDE SEQUENCE [LARGE SCALE GENOMIC DNA]</scope>
    <scope>GENOME REANNOTATION</scope>
    <source>
        <strain>ATCC BAA-935 / AF2122/97</strain>
    </source>
</reference>
<gene>
    <name type="ordered locus">BQ2027_MB0514</name>
</gene>
<sequence>MGNVAGETRANVIPLHTNRSRVAARRRAGQRAESRQHPSLLSDPNDRASAEQIAAVVREIDEHRRAAGATTSSTEATPNDLAQLVAAVAGFLRQRLTGDYSVDEFGFDPHFNSAIVRPLLRFFFKSWFRVEVSGVENIPRDGAALVVANHAGVLPFDGLMLSVAVHDEHPAHRDLRLLAADMVFDLPVIGEAARKAGHTMACTTDAHRLLASGELTAVFPEGYKGLGKRFEDRYRLQRFGRGGFVSAALRTKAPIVPCSIIGSEEIYPMLTDVKLLARLFGLPYFPITPLFPLAGPVGLVPLPSKWRIAFGEPICTADYASTDADDPMVTFELTDQVRETIQQTLYRLLAGRRNIFFG</sequence>
<evidence type="ECO:0000256" key="1">
    <source>
        <dbReference type="SAM" id="MobiDB-lite"/>
    </source>
</evidence>
<evidence type="ECO:0000305" key="2"/>
<keyword id="KW-1185">Reference proteome</keyword>